<proteinExistence type="inferred from homology"/>
<evidence type="ECO:0000255" key="1">
    <source>
        <dbReference type="HAMAP-Rule" id="MF_01227"/>
    </source>
</evidence>
<accession>Q39EV7</accession>
<sequence>MTKYVFVTGGVVSSLGKGIAAASLAAILESRGLKVTLLKLDPYINVDPGTMSPFQHGEVFVTEDGAETDLDLGHYERFISTKMRKANNFTTGQIYESVIRKERRGDYLGKTVQVIPHITNEIQAFIERGAASATCGEPDVAIVEIGGTVGDIESLPFLEAARQMSLRLGRNSACFVHLTLVPYVATAGELKTKPTQHSVQKLREIGILPHVLLCRADRRIPDDESKKISMFSNVPEDAVISVWDADSIYKIPQMLHDQGLDRIICEELKLSPKDADLTMWSELVEKLENPKHEVTIGMVGKYVDLTESYKSLIEALRHASLHTSTKVNIEYIDSEEIETNGVDSLKHLDAVLVPGGFGRRGTEGKIAAIRYAREAKVPYLGICLGMQLAVIEFARNVVGLKQANSTEFEPDTPERVVALITEWYDRDGKVETRTEESDLGGTMRLGSQRCPIKPGTMAEEIYGKDVNERHRHRYEVNNRFVPQLEAGGLIISARTPSEDLPEMMELPRSMHPWFVGVQFHPEFTSTPRDGHPLFKSFVEAALANKQARGV</sequence>
<reference key="1">
    <citation type="submission" date="2005-10" db="EMBL/GenBank/DDBJ databases">
        <title>Complete sequence of chromosome 1 of Burkholderia sp. 383.</title>
        <authorList>
            <consortium name="US DOE Joint Genome Institute"/>
            <person name="Copeland A."/>
            <person name="Lucas S."/>
            <person name="Lapidus A."/>
            <person name="Barry K."/>
            <person name="Detter J.C."/>
            <person name="Glavina T."/>
            <person name="Hammon N."/>
            <person name="Israni S."/>
            <person name="Pitluck S."/>
            <person name="Chain P."/>
            <person name="Malfatti S."/>
            <person name="Shin M."/>
            <person name="Vergez L."/>
            <person name="Schmutz J."/>
            <person name="Larimer F."/>
            <person name="Land M."/>
            <person name="Kyrpides N."/>
            <person name="Lykidis A."/>
            <person name="Richardson P."/>
        </authorList>
    </citation>
    <scope>NUCLEOTIDE SEQUENCE [LARGE SCALE GENOMIC DNA]</scope>
    <source>
        <strain>ATCC 17760 / DSM 23089 / LMG 22485 / NCIMB 9086 / R18194 / 383</strain>
    </source>
</reference>
<comment type="function">
    <text evidence="1">Catalyzes the ATP-dependent amination of UTP to CTP with either L-glutamine or ammonia as the source of nitrogen. Regulates intracellular CTP levels through interactions with the four ribonucleotide triphosphates.</text>
</comment>
<comment type="catalytic activity">
    <reaction evidence="1">
        <text>UTP + L-glutamine + ATP + H2O = CTP + L-glutamate + ADP + phosphate + 2 H(+)</text>
        <dbReference type="Rhea" id="RHEA:26426"/>
        <dbReference type="ChEBI" id="CHEBI:15377"/>
        <dbReference type="ChEBI" id="CHEBI:15378"/>
        <dbReference type="ChEBI" id="CHEBI:29985"/>
        <dbReference type="ChEBI" id="CHEBI:30616"/>
        <dbReference type="ChEBI" id="CHEBI:37563"/>
        <dbReference type="ChEBI" id="CHEBI:43474"/>
        <dbReference type="ChEBI" id="CHEBI:46398"/>
        <dbReference type="ChEBI" id="CHEBI:58359"/>
        <dbReference type="ChEBI" id="CHEBI:456216"/>
        <dbReference type="EC" id="6.3.4.2"/>
    </reaction>
</comment>
<comment type="catalytic activity">
    <reaction evidence="1">
        <text>L-glutamine + H2O = L-glutamate + NH4(+)</text>
        <dbReference type="Rhea" id="RHEA:15889"/>
        <dbReference type="ChEBI" id="CHEBI:15377"/>
        <dbReference type="ChEBI" id="CHEBI:28938"/>
        <dbReference type="ChEBI" id="CHEBI:29985"/>
        <dbReference type="ChEBI" id="CHEBI:58359"/>
    </reaction>
</comment>
<comment type="catalytic activity">
    <reaction evidence="1">
        <text>UTP + NH4(+) + ATP = CTP + ADP + phosphate + 2 H(+)</text>
        <dbReference type="Rhea" id="RHEA:16597"/>
        <dbReference type="ChEBI" id="CHEBI:15378"/>
        <dbReference type="ChEBI" id="CHEBI:28938"/>
        <dbReference type="ChEBI" id="CHEBI:30616"/>
        <dbReference type="ChEBI" id="CHEBI:37563"/>
        <dbReference type="ChEBI" id="CHEBI:43474"/>
        <dbReference type="ChEBI" id="CHEBI:46398"/>
        <dbReference type="ChEBI" id="CHEBI:456216"/>
    </reaction>
</comment>
<comment type="activity regulation">
    <text evidence="1">Allosterically activated by GTP, when glutamine is the substrate; GTP has no effect on the reaction when ammonia is the substrate. The allosteric effector GTP functions by stabilizing the protein conformation that binds the tetrahedral intermediate(s) formed during glutamine hydrolysis. Inhibited by the product CTP, via allosteric rather than competitive inhibition.</text>
</comment>
<comment type="pathway">
    <text evidence="1">Pyrimidine metabolism; CTP biosynthesis via de novo pathway; CTP from UDP: step 2/2.</text>
</comment>
<comment type="subunit">
    <text evidence="1">Homotetramer.</text>
</comment>
<comment type="miscellaneous">
    <text evidence="1">CTPSs have evolved a hybrid strategy for distinguishing between UTP and CTP. The overlapping regions of the product feedback inhibitory and substrate sites recognize a common feature in both compounds, the triphosphate moiety. To differentiate isosteric substrate and product pyrimidine rings, an additional pocket far from the expected kinase/ligase catalytic site, specifically recognizes the cytosine and ribose portions of the product inhibitor.</text>
</comment>
<comment type="similarity">
    <text evidence="1">Belongs to the CTP synthase family.</text>
</comment>
<feature type="chain" id="PRO_0000266085" description="CTP synthase">
    <location>
        <begin position="1"/>
        <end position="550"/>
    </location>
</feature>
<feature type="domain" description="Glutamine amidotransferase type-1" evidence="1">
    <location>
        <begin position="295"/>
        <end position="547"/>
    </location>
</feature>
<feature type="region of interest" description="Amidoligase domain" evidence="1">
    <location>
        <begin position="1"/>
        <end position="270"/>
    </location>
</feature>
<feature type="active site" description="Nucleophile; for glutamine hydrolysis" evidence="1">
    <location>
        <position position="383"/>
    </location>
</feature>
<feature type="active site" evidence="1">
    <location>
        <position position="520"/>
    </location>
</feature>
<feature type="active site" evidence="1">
    <location>
        <position position="522"/>
    </location>
</feature>
<feature type="binding site" evidence="1">
    <location>
        <position position="13"/>
    </location>
    <ligand>
        <name>CTP</name>
        <dbReference type="ChEBI" id="CHEBI:37563"/>
        <note>allosteric inhibitor</note>
    </ligand>
</feature>
<feature type="binding site" evidence="1">
    <location>
        <position position="13"/>
    </location>
    <ligand>
        <name>UTP</name>
        <dbReference type="ChEBI" id="CHEBI:46398"/>
    </ligand>
</feature>
<feature type="binding site" evidence="1">
    <location>
        <begin position="14"/>
        <end position="19"/>
    </location>
    <ligand>
        <name>ATP</name>
        <dbReference type="ChEBI" id="CHEBI:30616"/>
    </ligand>
</feature>
<feature type="binding site" evidence="1">
    <location>
        <position position="71"/>
    </location>
    <ligand>
        <name>ATP</name>
        <dbReference type="ChEBI" id="CHEBI:30616"/>
    </ligand>
</feature>
<feature type="binding site" evidence="1">
    <location>
        <position position="71"/>
    </location>
    <ligand>
        <name>Mg(2+)</name>
        <dbReference type="ChEBI" id="CHEBI:18420"/>
    </ligand>
</feature>
<feature type="binding site" evidence="1">
    <location>
        <position position="144"/>
    </location>
    <ligand>
        <name>Mg(2+)</name>
        <dbReference type="ChEBI" id="CHEBI:18420"/>
    </ligand>
</feature>
<feature type="binding site" evidence="1">
    <location>
        <begin position="151"/>
        <end position="153"/>
    </location>
    <ligand>
        <name>CTP</name>
        <dbReference type="ChEBI" id="CHEBI:37563"/>
        <note>allosteric inhibitor</note>
    </ligand>
</feature>
<feature type="binding site" evidence="1">
    <location>
        <begin position="191"/>
        <end position="196"/>
    </location>
    <ligand>
        <name>CTP</name>
        <dbReference type="ChEBI" id="CHEBI:37563"/>
        <note>allosteric inhibitor</note>
    </ligand>
</feature>
<feature type="binding site" evidence="1">
    <location>
        <begin position="191"/>
        <end position="196"/>
    </location>
    <ligand>
        <name>UTP</name>
        <dbReference type="ChEBI" id="CHEBI:46398"/>
    </ligand>
</feature>
<feature type="binding site" evidence="1">
    <location>
        <position position="227"/>
    </location>
    <ligand>
        <name>CTP</name>
        <dbReference type="ChEBI" id="CHEBI:37563"/>
        <note>allosteric inhibitor</note>
    </ligand>
</feature>
<feature type="binding site" evidence="1">
    <location>
        <position position="227"/>
    </location>
    <ligand>
        <name>UTP</name>
        <dbReference type="ChEBI" id="CHEBI:46398"/>
    </ligand>
</feature>
<feature type="binding site" evidence="1">
    <location>
        <position position="356"/>
    </location>
    <ligand>
        <name>L-glutamine</name>
        <dbReference type="ChEBI" id="CHEBI:58359"/>
    </ligand>
</feature>
<feature type="binding site" evidence="1">
    <location>
        <begin position="384"/>
        <end position="387"/>
    </location>
    <ligand>
        <name>L-glutamine</name>
        <dbReference type="ChEBI" id="CHEBI:58359"/>
    </ligand>
</feature>
<feature type="binding site" evidence="1">
    <location>
        <position position="407"/>
    </location>
    <ligand>
        <name>L-glutamine</name>
        <dbReference type="ChEBI" id="CHEBI:58359"/>
    </ligand>
</feature>
<feature type="binding site" evidence="1">
    <location>
        <position position="473"/>
    </location>
    <ligand>
        <name>L-glutamine</name>
        <dbReference type="ChEBI" id="CHEBI:58359"/>
    </ligand>
</feature>
<gene>
    <name evidence="1" type="primary">pyrG</name>
    <name type="ordered locus">Bcep18194_A5415</name>
</gene>
<organism>
    <name type="scientific">Burkholderia lata (strain ATCC 17760 / DSM 23089 / LMG 22485 / NCIMB 9086 / R18194 / 383)</name>
    <dbReference type="NCBI Taxonomy" id="482957"/>
    <lineage>
        <taxon>Bacteria</taxon>
        <taxon>Pseudomonadati</taxon>
        <taxon>Pseudomonadota</taxon>
        <taxon>Betaproteobacteria</taxon>
        <taxon>Burkholderiales</taxon>
        <taxon>Burkholderiaceae</taxon>
        <taxon>Burkholderia</taxon>
        <taxon>Burkholderia cepacia complex</taxon>
    </lineage>
</organism>
<name>PYRG_BURL3</name>
<protein>
    <recommendedName>
        <fullName evidence="1">CTP synthase</fullName>
        <ecNumber evidence="1">6.3.4.2</ecNumber>
    </recommendedName>
    <alternativeName>
        <fullName evidence="1">Cytidine 5'-triphosphate synthase</fullName>
    </alternativeName>
    <alternativeName>
        <fullName evidence="1">Cytidine triphosphate synthetase</fullName>
        <shortName evidence="1">CTP synthetase</shortName>
        <shortName evidence="1">CTPS</shortName>
    </alternativeName>
    <alternativeName>
        <fullName evidence="1">UTP--ammonia ligase</fullName>
    </alternativeName>
</protein>
<dbReference type="EC" id="6.3.4.2" evidence="1"/>
<dbReference type="EMBL" id="CP000151">
    <property type="protein sequence ID" value="ABB09009.1"/>
    <property type="molecule type" value="Genomic_DNA"/>
</dbReference>
<dbReference type="RefSeq" id="WP_011352546.1">
    <property type="nucleotide sequence ID" value="NC_007510.1"/>
</dbReference>
<dbReference type="SMR" id="Q39EV7"/>
<dbReference type="MEROPS" id="C26.964"/>
<dbReference type="GeneID" id="45095296"/>
<dbReference type="KEGG" id="bur:Bcep18194_A5415"/>
<dbReference type="PATRIC" id="fig|482957.22.peg.2368"/>
<dbReference type="HOGENOM" id="CLU_011675_5_0_4"/>
<dbReference type="UniPathway" id="UPA00159">
    <property type="reaction ID" value="UER00277"/>
</dbReference>
<dbReference type="Proteomes" id="UP000002705">
    <property type="component" value="Chromosome 1"/>
</dbReference>
<dbReference type="GO" id="GO:0005829">
    <property type="term" value="C:cytosol"/>
    <property type="evidence" value="ECO:0007669"/>
    <property type="project" value="TreeGrafter"/>
</dbReference>
<dbReference type="GO" id="GO:0005524">
    <property type="term" value="F:ATP binding"/>
    <property type="evidence" value="ECO:0007669"/>
    <property type="project" value="UniProtKB-KW"/>
</dbReference>
<dbReference type="GO" id="GO:0003883">
    <property type="term" value="F:CTP synthase activity"/>
    <property type="evidence" value="ECO:0007669"/>
    <property type="project" value="UniProtKB-UniRule"/>
</dbReference>
<dbReference type="GO" id="GO:0004359">
    <property type="term" value="F:glutaminase activity"/>
    <property type="evidence" value="ECO:0007669"/>
    <property type="project" value="RHEA"/>
</dbReference>
<dbReference type="GO" id="GO:0042802">
    <property type="term" value="F:identical protein binding"/>
    <property type="evidence" value="ECO:0007669"/>
    <property type="project" value="TreeGrafter"/>
</dbReference>
<dbReference type="GO" id="GO:0046872">
    <property type="term" value="F:metal ion binding"/>
    <property type="evidence" value="ECO:0007669"/>
    <property type="project" value="UniProtKB-KW"/>
</dbReference>
<dbReference type="GO" id="GO:0044210">
    <property type="term" value="P:'de novo' CTP biosynthetic process"/>
    <property type="evidence" value="ECO:0007669"/>
    <property type="project" value="UniProtKB-UniRule"/>
</dbReference>
<dbReference type="GO" id="GO:0019856">
    <property type="term" value="P:pyrimidine nucleobase biosynthetic process"/>
    <property type="evidence" value="ECO:0007669"/>
    <property type="project" value="TreeGrafter"/>
</dbReference>
<dbReference type="CDD" id="cd03113">
    <property type="entry name" value="CTPS_N"/>
    <property type="match status" value="1"/>
</dbReference>
<dbReference type="CDD" id="cd01746">
    <property type="entry name" value="GATase1_CTP_Synthase"/>
    <property type="match status" value="1"/>
</dbReference>
<dbReference type="FunFam" id="3.40.50.300:FF:000009">
    <property type="entry name" value="CTP synthase"/>
    <property type="match status" value="1"/>
</dbReference>
<dbReference type="FunFam" id="3.40.50.880:FF:000002">
    <property type="entry name" value="CTP synthase"/>
    <property type="match status" value="1"/>
</dbReference>
<dbReference type="Gene3D" id="3.40.50.880">
    <property type="match status" value="1"/>
</dbReference>
<dbReference type="Gene3D" id="3.40.50.300">
    <property type="entry name" value="P-loop containing nucleotide triphosphate hydrolases"/>
    <property type="match status" value="1"/>
</dbReference>
<dbReference type="HAMAP" id="MF_01227">
    <property type="entry name" value="PyrG"/>
    <property type="match status" value="1"/>
</dbReference>
<dbReference type="InterPro" id="IPR029062">
    <property type="entry name" value="Class_I_gatase-like"/>
</dbReference>
<dbReference type="InterPro" id="IPR004468">
    <property type="entry name" value="CTP_synthase"/>
</dbReference>
<dbReference type="InterPro" id="IPR017456">
    <property type="entry name" value="CTP_synthase_N"/>
</dbReference>
<dbReference type="InterPro" id="IPR017926">
    <property type="entry name" value="GATASE"/>
</dbReference>
<dbReference type="InterPro" id="IPR033828">
    <property type="entry name" value="GATase1_CTP_Synthase"/>
</dbReference>
<dbReference type="InterPro" id="IPR027417">
    <property type="entry name" value="P-loop_NTPase"/>
</dbReference>
<dbReference type="NCBIfam" id="NF003792">
    <property type="entry name" value="PRK05380.1"/>
    <property type="match status" value="1"/>
</dbReference>
<dbReference type="NCBIfam" id="TIGR00337">
    <property type="entry name" value="PyrG"/>
    <property type="match status" value="1"/>
</dbReference>
<dbReference type="PANTHER" id="PTHR11550">
    <property type="entry name" value="CTP SYNTHASE"/>
    <property type="match status" value="1"/>
</dbReference>
<dbReference type="PANTHER" id="PTHR11550:SF0">
    <property type="entry name" value="CTP SYNTHASE-RELATED"/>
    <property type="match status" value="1"/>
</dbReference>
<dbReference type="Pfam" id="PF06418">
    <property type="entry name" value="CTP_synth_N"/>
    <property type="match status" value="1"/>
</dbReference>
<dbReference type="Pfam" id="PF00117">
    <property type="entry name" value="GATase"/>
    <property type="match status" value="1"/>
</dbReference>
<dbReference type="SUPFAM" id="SSF52317">
    <property type="entry name" value="Class I glutamine amidotransferase-like"/>
    <property type="match status" value="1"/>
</dbReference>
<dbReference type="SUPFAM" id="SSF52540">
    <property type="entry name" value="P-loop containing nucleoside triphosphate hydrolases"/>
    <property type="match status" value="1"/>
</dbReference>
<dbReference type="PROSITE" id="PS51273">
    <property type="entry name" value="GATASE_TYPE_1"/>
    <property type="match status" value="1"/>
</dbReference>
<keyword id="KW-0067">ATP-binding</keyword>
<keyword id="KW-0315">Glutamine amidotransferase</keyword>
<keyword id="KW-0436">Ligase</keyword>
<keyword id="KW-0460">Magnesium</keyword>
<keyword id="KW-0479">Metal-binding</keyword>
<keyword id="KW-0547">Nucleotide-binding</keyword>
<keyword id="KW-0665">Pyrimidine biosynthesis</keyword>